<sequence>MVKRKGASSSEEGWNYEAKVAEIEGIITRIEAGELELEAVFEQFASAVEYLRQCESFLQQRQQQVDLLIETLSEE</sequence>
<dbReference type="EC" id="3.1.11.6" evidence="1"/>
<dbReference type="EMBL" id="CP001037">
    <property type="protein sequence ID" value="ACC81442.1"/>
    <property type="molecule type" value="Genomic_DNA"/>
</dbReference>
<dbReference type="RefSeq" id="WP_012409433.1">
    <property type="nucleotide sequence ID" value="NC_010628.1"/>
</dbReference>
<dbReference type="SMR" id="B2IWI8"/>
<dbReference type="STRING" id="63737.Npun_R2910"/>
<dbReference type="EnsemblBacteria" id="ACC81442">
    <property type="protein sequence ID" value="ACC81442"/>
    <property type="gene ID" value="Npun_R2910"/>
</dbReference>
<dbReference type="KEGG" id="npu:Npun_R2910"/>
<dbReference type="eggNOG" id="COG1722">
    <property type="taxonomic scope" value="Bacteria"/>
</dbReference>
<dbReference type="HOGENOM" id="CLU_145918_1_0_3"/>
<dbReference type="OrthoDB" id="427334at2"/>
<dbReference type="PhylomeDB" id="B2IWI8"/>
<dbReference type="Proteomes" id="UP000001191">
    <property type="component" value="Chromosome"/>
</dbReference>
<dbReference type="GO" id="GO:0005737">
    <property type="term" value="C:cytoplasm"/>
    <property type="evidence" value="ECO:0007669"/>
    <property type="project" value="UniProtKB-SubCell"/>
</dbReference>
<dbReference type="GO" id="GO:0009318">
    <property type="term" value="C:exodeoxyribonuclease VII complex"/>
    <property type="evidence" value="ECO:0007669"/>
    <property type="project" value="InterPro"/>
</dbReference>
<dbReference type="GO" id="GO:0008855">
    <property type="term" value="F:exodeoxyribonuclease VII activity"/>
    <property type="evidence" value="ECO:0007669"/>
    <property type="project" value="UniProtKB-UniRule"/>
</dbReference>
<dbReference type="GO" id="GO:0006308">
    <property type="term" value="P:DNA catabolic process"/>
    <property type="evidence" value="ECO:0007669"/>
    <property type="project" value="UniProtKB-UniRule"/>
</dbReference>
<dbReference type="Gene3D" id="1.10.287.1040">
    <property type="entry name" value="Exonuclease VII, small subunit"/>
    <property type="match status" value="1"/>
</dbReference>
<dbReference type="HAMAP" id="MF_00337">
    <property type="entry name" value="Exonuc_7_S"/>
    <property type="match status" value="1"/>
</dbReference>
<dbReference type="InterPro" id="IPR003761">
    <property type="entry name" value="Exonuc_VII_S"/>
</dbReference>
<dbReference type="InterPro" id="IPR037004">
    <property type="entry name" value="Exonuc_VII_ssu_sf"/>
</dbReference>
<dbReference type="NCBIfam" id="TIGR01280">
    <property type="entry name" value="xseB"/>
    <property type="match status" value="1"/>
</dbReference>
<dbReference type="Pfam" id="PF02609">
    <property type="entry name" value="Exonuc_VII_S"/>
    <property type="match status" value="1"/>
</dbReference>
<dbReference type="PIRSF" id="PIRSF006488">
    <property type="entry name" value="Exonuc_VII_S"/>
    <property type="match status" value="1"/>
</dbReference>
<dbReference type="SUPFAM" id="SSF116842">
    <property type="entry name" value="XseB-like"/>
    <property type="match status" value="1"/>
</dbReference>
<organism>
    <name type="scientific">Nostoc punctiforme (strain ATCC 29133 / PCC 73102)</name>
    <dbReference type="NCBI Taxonomy" id="63737"/>
    <lineage>
        <taxon>Bacteria</taxon>
        <taxon>Bacillati</taxon>
        <taxon>Cyanobacteriota</taxon>
        <taxon>Cyanophyceae</taxon>
        <taxon>Nostocales</taxon>
        <taxon>Nostocaceae</taxon>
        <taxon>Nostoc</taxon>
    </lineage>
</organism>
<gene>
    <name evidence="1" type="primary">xseB</name>
    <name type="ordered locus">Npun_R2910</name>
</gene>
<feature type="chain" id="PRO_1000119941" description="Exodeoxyribonuclease 7 small subunit">
    <location>
        <begin position="1"/>
        <end position="75"/>
    </location>
</feature>
<accession>B2IWI8</accession>
<comment type="function">
    <text evidence="1">Bidirectionally degrades single-stranded DNA into large acid-insoluble oligonucleotides, which are then degraded further into small acid-soluble oligonucleotides.</text>
</comment>
<comment type="catalytic activity">
    <reaction evidence="1">
        <text>Exonucleolytic cleavage in either 5'- to 3'- or 3'- to 5'-direction to yield nucleoside 5'-phosphates.</text>
        <dbReference type="EC" id="3.1.11.6"/>
    </reaction>
</comment>
<comment type="subunit">
    <text evidence="1">Heterooligomer composed of large and small subunits.</text>
</comment>
<comment type="subcellular location">
    <subcellularLocation>
        <location evidence="1">Cytoplasm</location>
    </subcellularLocation>
</comment>
<comment type="similarity">
    <text evidence="1">Belongs to the XseB family.</text>
</comment>
<reference key="1">
    <citation type="journal article" date="2013" name="Plant Physiol.">
        <title>A Nostoc punctiforme Sugar Transporter Necessary to Establish a Cyanobacterium-Plant Symbiosis.</title>
        <authorList>
            <person name="Ekman M."/>
            <person name="Picossi S."/>
            <person name="Campbell E.L."/>
            <person name="Meeks J.C."/>
            <person name="Flores E."/>
        </authorList>
    </citation>
    <scope>NUCLEOTIDE SEQUENCE [LARGE SCALE GENOMIC DNA]</scope>
    <source>
        <strain>ATCC 29133 / PCC 73102</strain>
    </source>
</reference>
<protein>
    <recommendedName>
        <fullName evidence="1">Exodeoxyribonuclease 7 small subunit</fullName>
        <ecNumber evidence="1">3.1.11.6</ecNumber>
    </recommendedName>
    <alternativeName>
        <fullName evidence="1">Exodeoxyribonuclease VII small subunit</fullName>
        <shortName evidence="1">Exonuclease VII small subunit</shortName>
    </alternativeName>
</protein>
<name>EX7S_NOSP7</name>
<keyword id="KW-0963">Cytoplasm</keyword>
<keyword id="KW-0269">Exonuclease</keyword>
<keyword id="KW-0378">Hydrolase</keyword>
<keyword id="KW-0540">Nuclease</keyword>
<keyword id="KW-1185">Reference proteome</keyword>
<proteinExistence type="inferred from homology"/>
<evidence type="ECO:0000255" key="1">
    <source>
        <dbReference type="HAMAP-Rule" id="MF_00337"/>
    </source>
</evidence>